<organism>
    <name type="scientific">Pseudoalteromonas ulvae</name>
    <dbReference type="NCBI Taxonomy" id="107327"/>
    <lineage>
        <taxon>Bacteria</taxon>
        <taxon>Pseudomonadati</taxon>
        <taxon>Pseudomonadota</taxon>
        <taxon>Gammaproteobacteria</taxon>
        <taxon>Alteromonadales</taxon>
        <taxon>Pseudoalteromonadaceae</taxon>
        <taxon>Pseudoalteromonas</taxon>
    </lineage>
</organism>
<sequence>MEIHMTSIQELVINFHMTEACNYRCGYCYATWQDNSSDTELHHASENIHSLLLKLADYFFADNSLRQTLKYQSVRINFAGGEPVMLGSRFIDAILFAKQLGFATSIITNGHLLSTVMLKKIAVHLDMLGISFDTGDYLIAQSIGRVDRKKSWLSPARVLDVVTQYRALNPKGKVKINTVVNAYNWRENLTQTITQLKPDKWKLLRVLPVYSKEMTVLQWQYESYVHKHQVHADVIVVEDNDDMWQSYLMINPEGRFYQNAGACKGLTYSPPVLEVGVEEALKYINFNAEAFSKRYQSIHLPLAMSAGA</sequence>
<feature type="chain" id="PRO_0000456424" description="S-adenosylmethionine-dependent nucleotide dehydratase">
    <location>
        <begin position="1"/>
        <end position="308"/>
    </location>
</feature>
<feature type="domain" description="Radical SAM core" evidence="2">
    <location>
        <begin position="7"/>
        <end position="253"/>
    </location>
</feature>
<feature type="binding site" evidence="2">
    <location>
        <position position="21"/>
    </location>
    <ligand>
        <name>[4Fe-4S] cluster</name>
        <dbReference type="ChEBI" id="CHEBI:49883"/>
        <note>4Fe-4S-S-AdoMet</note>
    </ligand>
</feature>
<feature type="binding site" evidence="2">
    <location>
        <position position="25"/>
    </location>
    <ligand>
        <name>[4Fe-4S] cluster</name>
        <dbReference type="ChEBI" id="CHEBI:49883"/>
        <note>4Fe-4S-S-AdoMet</note>
    </ligand>
</feature>
<feature type="binding site" evidence="2">
    <location>
        <position position="28"/>
    </location>
    <ligand>
        <name>[4Fe-4S] cluster</name>
        <dbReference type="ChEBI" id="CHEBI:49883"/>
        <note>4Fe-4S-S-AdoMet</note>
    </ligand>
</feature>
<accession>A0A244CMP0</accession>
<dbReference type="EC" id="4.2.-.-" evidence="7"/>
<dbReference type="EMBL" id="MWPV01000005">
    <property type="protein sequence ID" value="OUL56864.1"/>
    <property type="molecule type" value="Genomic_DNA"/>
</dbReference>
<dbReference type="SMR" id="A0A244CMP0"/>
<dbReference type="OrthoDB" id="9792276at2"/>
<dbReference type="Proteomes" id="UP000194841">
    <property type="component" value="Unassembled WGS sequence"/>
</dbReference>
<dbReference type="GO" id="GO:0051539">
    <property type="term" value="F:4 iron, 4 sulfur cluster binding"/>
    <property type="evidence" value="ECO:0007669"/>
    <property type="project" value="UniProtKB-KW"/>
</dbReference>
<dbReference type="GO" id="GO:0016829">
    <property type="term" value="F:lyase activity"/>
    <property type="evidence" value="ECO:0007669"/>
    <property type="project" value="UniProtKB-KW"/>
</dbReference>
<dbReference type="GO" id="GO:0046872">
    <property type="term" value="F:metal ion binding"/>
    <property type="evidence" value="ECO:0007669"/>
    <property type="project" value="UniProtKB-KW"/>
</dbReference>
<dbReference type="GO" id="GO:0051607">
    <property type="term" value="P:defense response to virus"/>
    <property type="evidence" value="ECO:0007669"/>
    <property type="project" value="UniProtKB-KW"/>
</dbReference>
<dbReference type="CDD" id="cd01335">
    <property type="entry name" value="Radical_SAM"/>
    <property type="match status" value="1"/>
</dbReference>
<dbReference type="Gene3D" id="3.20.20.70">
    <property type="entry name" value="Aldolase class I"/>
    <property type="match status" value="1"/>
</dbReference>
<dbReference type="InterPro" id="IPR013785">
    <property type="entry name" value="Aldolase_TIM"/>
</dbReference>
<dbReference type="InterPro" id="IPR051196">
    <property type="entry name" value="RSAD2/Viperin_antiviral"/>
</dbReference>
<dbReference type="InterPro" id="IPR007197">
    <property type="entry name" value="rSAM"/>
</dbReference>
<dbReference type="NCBIfam" id="NF038283">
    <property type="entry name" value="viperin_w_prok"/>
    <property type="match status" value="1"/>
</dbReference>
<dbReference type="PANTHER" id="PTHR21339">
    <property type="entry name" value="RADICAL S-ADENOSYL METHIONINE DOMAIN-CONTAINING PROTEIN 2"/>
    <property type="match status" value="1"/>
</dbReference>
<dbReference type="PANTHER" id="PTHR21339:SF0">
    <property type="entry name" value="S-ADENOSYLMETHIONINE-DEPENDENT NUCLEOTIDE DEHYDRATASE RSAD2"/>
    <property type="match status" value="1"/>
</dbReference>
<dbReference type="Pfam" id="PF04055">
    <property type="entry name" value="Radical_SAM"/>
    <property type="match status" value="1"/>
</dbReference>
<dbReference type="SFLD" id="SFLDG01088">
    <property type="entry name" value="antiviral_proteins"/>
    <property type="match status" value="1"/>
</dbReference>
<dbReference type="SFLD" id="SFLDS00029">
    <property type="entry name" value="Radical_SAM"/>
    <property type="match status" value="1"/>
</dbReference>
<dbReference type="SFLD" id="SFLDG01067">
    <property type="entry name" value="SPASM/twitch_domain_containing"/>
    <property type="match status" value="1"/>
</dbReference>
<dbReference type="SUPFAM" id="SSF102114">
    <property type="entry name" value="Radical SAM enzymes"/>
    <property type="match status" value="1"/>
</dbReference>
<dbReference type="PROSITE" id="PS51918">
    <property type="entry name" value="RADICAL_SAM"/>
    <property type="match status" value="1"/>
</dbReference>
<gene>
    <name evidence="6" type="primary">vip58</name>
    <name evidence="8" type="ORF">B1199_15980</name>
</gene>
<proteinExistence type="evidence at protein level"/>
<reference evidence="8" key="1">
    <citation type="submission" date="2017-02" db="EMBL/GenBank/DDBJ databases">
        <title>Pseudoalteromonas ulvae TC14 Genome.</title>
        <authorList>
            <person name="Molmeret M."/>
        </authorList>
    </citation>
    <scope>NUCLEOTIDE SEQUENCE [LARGE SCALE GENOMIC DNA]</scope>
    <source>
        <strain>TC14</strain>
    </source>
</reference>
<reference key="2">
    <citation type="journal article" date="2021" name="Nature">
        <title>Prokaryotic viperins produce diverse antiviral molecules.</title>
        <authorList>
            <person name="Bernheim A."/>
            <person name="Millman A."/>
            <person name="Ofir G."/>
            <person name="Meitav G."/>
            <person name="Avraham C."/>
            <person name="Shomar H."/>
            <person name="Rosenberg M.M."/>
            <person name="Tal N."/>
            <person name="Melamed S."/>
            <person name="Amitai G."/>
            <person name="Sorek R."/>
        </authorList>
    </citation>
    <scope>FUNCTION IN ANTIVIRAL DEFENSE</scope>
    <scope>FUNCTION IN DDHCTP; DDHGTP AND DDHUTP SYNTHESIS</scope>
    <scope>PROBABLE CATALYTIC ACTIVITY</scope>
    <source>
        <strain>TC14</strain>
    </source>
</reference>
<reference key="3">
    <citation type="journal article" date="2022" name="Front. Mol. Biosci.">
        <title>Radical-SAM dependent nucleotide dehydratase (SAND), rectification of the names of an ancient iron-sulfur enzyme using NC-IUBMB recommendations.</title>
        <authorList>
            <person name="Ji Y."/>
            <person name="Wei L."/>
            <person name="Da A."/>
            <person name="Stark H."/>
            <person name="Hagedoorn P.-L."/>
            <person name="Ciofi-Baffoni S."/>
            <person name="Cowley S.A."/>
            <person name="Louro R.O."/>
            <person name="Todorovic S."/>
            <person name="Mroginski M.A."/>
            <person name="Nicolet Y."/>
            <person name="Roessler M.M."/>
            <person name="Le Brun N.E."/>
            <person name="Piccioli M."/>
            <person name="James W.S."/>
            <person name="Hagen W.R."/>
            <person name="Ebrahimi K.H."/>
        </authorList>
    </citation>
    <scope>NOMENCLATURE</scope>
</reference>
<name>SAND_PSEDV</name>
<keyword id="KW-0004">4Fe-4S</keyword>
<keyword id="KW-0051">Antiviral defense</keyword>
<keyword id="KW-0408">Iron</keyword>
<keyword id="KW-0411">Iron-sulfur</keyword>
<keyword id="KW-0456">Lyase</keyword>
<keyword id="KW-0479">Metal-binding</keyword>
<keyword id="KW-1185">Reference proteome</keyword>
<keyword id="KW-0949">S-adenosyl-L-methionine</keyword>
<evidence type="ECO:0000250" key="1">
    <source>
        <dbReference type="UniProtKB" id="P0DW53"/>
    </source>
</evidence>
<evidence type="ECO:0000255" key="2">
    <source>
        <dbReference type="PROSITE-ProRule" id="PRU01266"/>
    </source>
</evidence>
<evidence type="ECO:0000269" key="3">
    <source>
    </source>
</evidence>
<evidence type="ECO:0000303" key="4">
    <source>
    </source>
</evidence>
<evidence type="ECO:0000303" key="5">
    <source>
    </source>
</evidence>
<evidence type="ECO:0000305" key="6"/>
<evidence type="ECO:0000305" key="7">
    <source>
    </source>
</evidence>
<evidence type="ECO:0000312" key="8">
    <source>
        <dbReference type="EMBL" id="OUL56864.1"/>
    </source>
</evidence>
<protein>
    <recommendedName>
        <fullName evidence="5">S-adenosylmethionine-dependent nucleotide dehydratase</fullName>
        <shortName evidence="5">SAND</shortName>
        <ecNumber evidence="7">4.2.-.-</ecNumber>
    </recommendedName>
    <alternativeName>
        <fullName evidence="4">Prokaryotic viperin protein pVip58</fullName>
        <shortName evidence="4">pVip58</shortName>
    </alternativeName>
</protein>
<comment type="function">
    <text evidence="1 3">Expression of pVip58 in E.coli (strain MG1655) confers resistance to phages lambda, P1 and T7; delays culture collapse upon infection with T7. Catalyzes the conversion of cytidine triphosphate (CTP) to 3'-deoxy-3',4'-didehydro-CTP (ddhCTP), guanosine triphosphate (GTP) to 3'-deoxy-3',4'-didehydro-GTP (ddhGTP) and uridine triphosphate (UTP) to 3'-deoxy-3',4'-didehydro-UTP (ddhUTP), probably via a SAM-dependent radical mechanism (PubMed:32937646). The modified nucleotide represses transcription from T7 RNA polymerase-directed genes (possibly by acting as chain terminators), strongly suggesting these nucleotides block viral polymerase transcription (By similarity).</text>
</comment>
<comment type="catalytic activity">
    <reaction evidence="7">
        <text>CTP + AH2 + S-adenosyl-L-methionine = 3'-deoxy-3',4'-didehydro-CTP + 5'-deoxyadenosine + L-methionine + A + H2O + H(+)</text>
        <dbReference type="Rhea" id="RHEA:65944"/>
        <dbReference type="ChEBI" id="CHEBI:13193"/>
        <dbReference type="ChEBI" id="CHEBI:15377"/>
        <dbReference type="ChEBI" id="CHEBI:15378"/>
        <dbReference type="ChEBI" id="CHEBI:17319"/>
        <dbReference type="ChEBI" id="CHEBI:17499"/>
        <dbReference type="ChEBI" id="CHEBI:37563"/>
        <dbReference type="ChEBI" id="CHEBI:57844"/>
        <dbReference type="ChEBI" id="CHEBI:59789"/>
        <dbReference type="ChEBI" id="CHEBI:166821"/>
    </reaction>
    <physiologicalReaction direction="left-to-right" evidence="7">
        <dbReference type="Rhea" id="RHEA:65945"/>
    </physiologicalReaction>
</comment>
<comment type="catalytic activity">
    <reaction evidence="7">
        <text>GTP + AH2 + S-adenosyl-L-methionine = 3'-deoxy-3',4'-didehydro-GTP + 5'-deoxyadenosine + L-methionine + A + H2O + H(+)</text>
        <dbReference type="Rhea" id="RHEA:72143"/>
        <dbReference type="ChEBI" id="CHEBI:13193"/>
        <dbReference type="ChEBI" id="CHEBI:15377"/>
        <dbReference type="ChEBI" id="CHEBI:15378"/>
        <dbReference type="ChEBI" id="CHEBI:17319"/>
        <dbReference type="ChEBI" id="CHEBI:17499"/>
        <dbReference type="ChEBI" id="CHEBI:37565"/>
        <dbReference type="ChEBI" id="CHEBI:57844"/>
        <dbReference type="ChEBI" id="CHEBI:59789"/>
        <dbReference type="ChEBI" id="CHEBI:191857"/>
    </reaction>
    <physiologicalReaction direction="left-to-right" evidence="7">
        <dbReference type="Rhea" id="RHEA:72144"/>
    </physiologicalReaction>
</comment>
<comment type="catalytic activity">
    <reaction evidence="7">
        <text>UTP + AH2 + S-adenosyl-L-methionine = 3'-deoxy-3',4'-didehydro-UTP + 5'-deoxyadenosine + L-methionine + A + H2O + H(+)</text>
        <dbReference type="Rhea" id="RHEA:72147"/>
        <dbReference type="ChEBI" id="CHEBI:13193"/>
        <dbReference type="ChEBI" id="CHEBI:15377"/>
        <dbReference type="ChEBI" id="CHEBI:15378"/>
        <dbReference type="ChEBI" id="CHEBI:17319"/>
        <dbReference type="ChEBI" id="CHEBI:17499"/>
        <dbReference type="ChEBI" id="CHEBI:46398"/>
        <dbReference type="ChEBI" id="CHEBI:57844"/>
        <dbReference type="ChEBI" id="CHEBI:59789"/>
        <dbReference type="ChEBI" id="CHEBI:191858"/>
    </reaction>
    <physiologicalReaction direction="left-to-right" evidence="7">
        <dbReference type="Rhea" id="RHEA:72148"/>
    </physiologicalReaction>
</comment>
<comment type="cofactor">
    <cofactor evidence="2">
        <name>[4Fe-4S] cluster</name>
        <dbReference type="ChEBI" id="CHEBI:49883"/>
    </cofactor>
</comment>
<comment type="miscellaneous">
    <text evidence="7">How this protein allows bacteria to resist viruses that do not encode their own RNA polymerase (such as lambda, P1) is unknown.</text>
</comment>
<comment type="similarity">
    <text evidence="7">Belongs to the radical SAM superfamily. Viperin family.</text>
</comment>